<feature type="chain" id="PRO_0000341738" description="2-succinyl-5-enolpyruvyl-6-hydroxy-3-cyclohexene-1-carboxylate synthase">
    <location>
        <begin position="1"/>
        <end position="556"/>
    </location>
</feature>
<keyword id="KW-0460">Magnesium</keyword>
<keyword id="KW-0464">Manganese</keyword>
<keyword id="KW-0474">Menaquinone biosynthesis</keyword>
<keyword id="KW-0479">Metal-binding</keyword>
<keyword id="KW-0786">Thiamine pyrophosphate</keyword>
<keyword id="KW-0808">Transferase</keyword>
<protein>
    <recommendedName>
        <fullName evidence="1">2-succinyl-5-enolpyruvyl-6-hydroxy-3-cyclohexene-1-carboxylate synthase</fullName>
        <shortName evidence="1">SEPHCHC synthase</shortName>
        <ecNumber evidence="1">2.2.1.9</ecNumber>
    </recommendedName>
    <alternativeName>
        <fullName evidence="1">Menaquinone biosynthesis protein MenD</fullName>
    </alternativeName>
</protein>
<organism>
    <name type="scientific">Escherichia coli (strain ATCC 8739 / DSM 1576 / NBRC 3972 / NCIMB 8545 / WDCM 00012 / Crooks)</name>
    <dbReference type="NCBI Taxonomy" id="481805"/>
    <lineage>
        <taxon>Bacteria</taxon>
        <taxon>Pseudomonadati</taxon>
        <taxon>Pseudomonadota</taxon>
        <taxon>Gammaproteobacteria</taxon>
        <taxon>Enterobacterales</taxon>
        <taxon>Enterobacteriaceae</taxon>
        <taxon>Escherichia</taxon>
    </lineage>
</organism>
<name>MEND_ECOLC</name>
<sequence>MSVSAFNRRWAAVILEALTRHGVRHICIAPGSRSTPLTLAAAENSAFIHHTHFDERGLGHLALGLAKVSKQPVAMIVTSGTAVANLYPALIEAGLTGEKLILLTADRPPELIDCGANQAIRQPGMFASHPTHSISLPRPTQDIPARWLVSTIDHALGTLHAGGVHINCPFAEPLYGEMDDTGLSWQQRLGDWWQDDKPWLREAPRLESEKQRDWFFWRQKRGVVVAGRMSAEEGKKVALWAQTLGWPLIGDVLSQTGQPLPCADLWLGNAKATSELQQAQIVVQLGSSLTGKRLLQWQASCEPEEYWIVDDIEGRLDPAHHRGRRLIANIADWLELHPAEKRQPWCVEIPRLAEQAMQAVIARRDAFGEAQLAHRICDYLPEQGQLFVGNSLVVRLIDALSQLPAGYPVYSNRGASGIDGLLSTAAGVQRASGKPTLAIVGDLSALYDLNALALLRQVSAPLVLIVVNNNGGQIFSLLPTPQSERERFYLMPQNVHFEHAAAMFELKYHRPQNWQELETAFADAWRTPTTTVIEMVVNDTDGAQTLQQLLAQVSHL</sequence>
<gene>
    <name evidence="1" type="primary">menD</name>
    <name type="ordered locus">EcolC_1384</name>
</gene>
<proteinExistence type="inferred from homology"/>
<evidence type="ECO:0000255" key="1">
    <source>
        <dbReference type="HAMAP-Rule" id="MF_01659"/>
    </source>
</evidence>
<comment type="function">
    <text evidence="1">Catalyzes the thiamine diphosphate-dependent decarboxylation of 2-oxoglutarate and the subsequent addition of the resulting succinic semialdehyde-thiamine pyrophosphate anion to isochorismate to yield 2-succinyl-5-enolpyruvyl-6-hydroxy-3-cyclohexene-1-carboxylate (SEPHCHC).</text>
</comment>
<comment type="catalytic activity">
    <reaction evidence="1">
        <text>isochorismate + 2-oxoglutarate + H(+) = 5-enolpyruvoyl-6-hydroxy-2-succinyl-cyclohex-3-ene-1-carboxylate + CO2</text>
        <dbReference type="Rhea" id="RHEA:25593"/>
        <dbReference type="ChEBI" id="CHEBI:15378"/>
        <dbReference type="ChEBI" id="CHEBI:16526"/>
        <dbReference type="ChEBI" id="CHEBI:16810"/>
        <dbReference type="ChEBI" id="CHEBI:29780"/>
        <dbReference type="ChEBI" id="CHEBI:58818"/>
        <dbReference type="EC" id="2.2.1.9"/>
    </reaction>
</comment>
<comment type="cofactor">
    <cofactor evidence="1">
        <name>Mg(2+)</name>
        <dbReference type="ChEBI" id="CHEBI:18420"/>
    </cofactor>
    <cofactor evidence="1">
        <name>Mn(2+)</name>
        <dbReference type="ChEBI" id="CHEBI:29035"/>
    </cofactor>
</comment>
<comment type="cofactor">
    <cofactor evidence="1">
        <name>thiamine diphosphate</name>
        <dbReference type="ChEBI" id="CHEBI:58937"/>
    </cofactor>
    <text evidence="1">Binds 1 thiamine pyrophosphate per subunit.</text>
</comment>
<comment type="pathway">
    <text evidence="1">Quinol/quinone metabolism; 1,4-dihydroxy-2-naphthoate biosynthesis; 1,4-dihydroxy-2-naphthoate from chorismate: step 2/7.</text>
</comment>
<comment type="pathway">
    <text evidence="1">Quinol/quinone metabolism; menaquinone biosynthesis.</text>
</comment>
<comment type="subunit">
    <text evidence="1">Homodimer.</text>
</comment>
<comment type="similarity">
    <text evidence="1">Belongs to the TPP enzyme family. MenD subfamily.</text>
</comment>
<accession>B1IXS2</accession>
<dbReference type="EC" id="2.2.1.9" evidence="1"/>
<dbReference type="EMBL" id="CP000946">
    <property type="protein sequence ID" value="ACA77048.1"/>
    <property type="molecule type" value="Genomic_DNA"/>
</dbReference>
<dbReference type="RefSeq" id="WP_012304851.1">
    <property type="nucleotide sequence ID" value="NC_010468.1"/>
</dbReference>
<dbReference type="SMR" id="B1IXS2"/>
<dbReference type="KEGG" id="ecl:EcolC_1384"/>
<dbReference type="HOGENOM" id="CLU_006051_3_0_6"/>
<dbReference type="UniPathway" id="UPA00079"/>
<dbReference type="UniPathway" id="UPA01057">
    <property type="reaction ID" value="UER00164"/>
</dbReference>
<dbReference type="GO" id="GO:0070204">
    <property type="term" value="F:2-succinyl-5-enolpyruvyl-6-hydroxy-3-cyclohexene-1-carboxylic-acid synthase activity"/>
    <property type="evidence" value="ECO:0007669"/>
    <property type="project" value="UniProtKB-UniRule"/>
</dbReference>
<dbReference type="GO" id="GO:0000287">
    <property type="term" value="F:magnesium ion binding"/>
    <property type="evidence" value="ECO:0007669"/>
    <property type="project" value="UniProtKB-UniRule"/>
</dbReference>
<dbReference type="GO" id="GO:0030145">
    <property type="term" value="F:manganese ion binding"/>
    <property type="evidence" value="ECO:0007669"/>
    <property type="project" value="UniProtKB-UniRule"/>
</dbReference>
<dbReference type="GO" id="GO:0030976">
    <property type="term" value="F:thiamine pyrophosphate binding"/>
    <property type="evidence" value="ECO:0007669"/>
    <property type="project" value="UniProtKB-UniRule"/>
</dbReference>
<dbReference type="GO" id="GO:0009234">
    <property type="term" value="P:menaquinone biosynthetic process"/>
    <property type="evidence" value="ECO:0007669"/>
    <property type="project" value="UniProtKB-UniRule"/>
</dbReference>
<dbReference type="CDD" id="cd07037">
    <property type="entry name" value="TPP_PYR_MenD"/>
    <property type="match status" value="1"/>
</dbReference>
<dbReference type="CDD" id="cd02009">
    <property type="entry name" value="TPP_SHCHC_synthase"/>
    <property type="match status" value="1"/>
</dbReference>
<dbReference type="FunFam" id="3.40.50.1220:FF:000010">
    <property type="entry name" value="2-succinyl-5-enolpyruvyl-6-hydroxy-3-cyclohexene-1-carboxylate synthase"/>
    <property type="match status" value="1"/>
</dbReference>
<dbReference type="FunFam" id="3.40.50.970:FF:000029">
    <property type="entry name" value="2-succinyl-5-enolpyruvyl-6-hydroxy-3-cyclohexene-1-carboxylate synthase"/>
    <property type="match status" value="1"/>
</dbReference>
<dbReference type="FunFam" id="3.40.50.970:FF:000035">
    <property type="entry name" value="2-succinyl-5-enolpyruvyl-6-hydroxy-3-cyclohexene-1-carboxylate synthase"/>
    <property type="match status" value="1"/>
</dbReference>
<dbReference type="Gene3D" id="3.40.50.970">
    <property type="match status" value="2"/>
</dbReference>
<dbReference type="Gene3D" id="3.40.50.1220">
    <property type="entry name" value="TPP-binding domain"/>
    <property type="match status" value="1"/>
</dbReference>
<dbReference type="HAMAP" id="MF_01659">
    <property type="entry name" value="MenD"/>
    <property type="match status" value="1"/>
</dbReference>
<dbReference type="InterPro" id="IPR004433">
    <property type="entry name" value="MenaQ_synth_MenD"/>
</dbReference>
<dbReference type="InterPro" id="IPR032264">
    <property type="entry name" value="MenD_middle"/>
</dbReference>
<dbReference type="InterPro" id="IPR029061">
    <property type="entry name" value="THDP-binding"/>
</dbReference>
<dbReference type="InterPro" id="IPR012001">
    <property type="entry name" value="Thiamin_PyroP_enz_TPP-bd_dom"/>
</dbReference>
<dbReference type="InterPro" id="IPR011766">
    <property type="entry name" value="TPP_enzyme_TPP-bd"/>
</dbReference>
<dbReference type="NCBIfam" id="TIGR00173">
    <property type="entry name" value="menD"/>
    <property type="match status" value="1"/>
</dbReference>
<dbReference type="PANTHER" id="PTHR42916">
    <property type="entry name" value="2-SUCCINYL-5-ENOLPYRUVYL-6-HYDROXY-3-CYCLOHEXENE-1-CARBOXYLATE SYNTHASE"/>
    <property type="match status" value="1"/>
</dbReference>
<dbReference type="PANTHER" id="PTHR42916:SF1">
    <property type="entry name" value="PROTEIN PHYLLO, CHLOROPLASTIC"/>
    <property type="match status" value="1"/>
</dbReference>
<dbReference type="Pfam" id="PF02775">
    <property type="entry name" value="TPP_enzyme_C"/>
    <property type="match status" value="1"/>
</dbReference>
<dbReference type="Pfam" id="PF16582">
    <property type="entry name" value="TPP_enzyme_M_2"/>
    <property type="match status" value="1"/>
</dbReference>
<dbReference type="Pfam" id="PF02776">
    <property type="entry name" value="TPP_enzyme_N"/>
    <property type="match status" value="1"/>
</dbReference>
<dbReference type="PIRSF" id="PIRSF004983">
    <property type="entry name" value="MenD"/>
    <property type="match status" value="1"/>
</dbReference>
<dbReference type="SUPFAM" id="SSF52518">
    <property type="entry name" value="Thiamin diphosphate-binding fold (THDP-binding)"/>
    <property type="match status" value="2"/>
</dbReference>
<reference key="1">
    <citation type="submission" date="2008-02" db="EMBL/GenBank/DDBJ databases">
        <title>Complete sequence of Escherichia coli C str. ATCC 8739.</title>
        <authorList>
            <person name="Copeland A."/>
            <person name="Lucas S."/>
            <person name="Lapidus A."/>
            <person name="Glavina del Rio T."/>
            <person name="Dalin E."/>
            <person name="Tice H."/>
            <person name="Bruce D."/>
            <person name="Goodwin L."/>
            <person name="Pitluck S."/>
            <person name="Kiss H."/>
            <person name="Brettin T."/>
            <person name="Detter J.C."/>
            <person name="Han C."/>
            <person name="Kuske C.R."/>
            <person name="Schmutz J."/>
            <person name="Larimer F."/>
            <person name="Land M."/>
            <person name="Hauser L."/>
            <person name="Kyrpides N."/>
            <person name="Mikhailova N."/>
            <person name="Ingram L."/>
            <person name="Richardson P."/>
        </authorList>
    </citation>
    <scope>NUCLEOTIDE SEQUENCE [LARGE SCALE GENOMIC DNA]</scope>
    <source>
        <strain>ATCC 8739 / DSM 1576 / NBRC 3972 / NCIMB 8545 / WDCM 00012 / Crooks</strain>
    </source>
</reference>